<keyword id="KW-0227">DNA damage</keyword>
<keyword id="KW-0228">DNA excision</keyword>
<keyword id="KW-0234">DNA repair</keyword>
<keyword id="KW-0255">Endonuclease</keyword>
<keyword id="KW-0378">Hydrolase</keyword>
<keyword id="KW-0540">Nuclease</keyword>
<feature type="chain" id="PRO_1000197851" description="UV DNA damage endonuclease">
    <location>
        <begin position="1"/>
        <end position="317"/>
    </location>
</feature>
<sequence>MIMRFGYVSHAMALWDCSPAKTITFTSFQKLSKQEREDKLYDVTKQNLEHTIRILHYNIAHEIPLYRLSSSIVPLATHPEVEFDYIGAFTPLWRKIGALIKEHNLRISFHPNQFTLFTSDKPHITTNAITDMTYHYKVLDAIGIADSSYINIHVGGAYGNKEKAIERFHENIKKLPAHIKKQMTLENDDKTCTTAETLSICQKEKIPFVFDYHHHMANLCEEPLEELLPAIFETWSHTNIVPKVHISSPKSKKEFRAHAEYIDLEFIKPFLHVAKKINHNFDIMIESKQKDLAMLQFIQELSSIRGIKRISSSTLQW</sequence>
<organism>
    <name type="scientific">Bacillus anthracis (strain A0248)</name>
    <dbReference type="NCBI Taxonomy" id="592021"/>
    <lineage>
        <taxon>Bacteria</taxon>
        <taxon>Bacillati</taxon>
        <taxon>Bacillota</taxon>
        <taxon>Bacilli</taxon>
        <taxon>Bacillales</taxon>
        <taxon>Bacillaceae</taxon>
        <taxon>Bacillus</taxon>
        <taxon>Bacillus cereus group</taxon>
    </lineage>
</organism>
<name>UVSE_BACAA</name>
<dbReference type="EC" id="3.-.-.-" evidence="2"/>
<dbReference type="EMBL" id="CP001598">
    <property type="protein sequence ID" value="ACQ47413.1"/>
    <property type="molecule type" value="Genomic_DNA"/>
</dbReference>
<dbReference type="RefSeq" id="WP_000605872.1">
    <property type="nucleotide sequence ID" value="NC_012659.1"/>
</dbReference>
<dbReference type="SMR" id="C3P2A9"/>
<dbReference type="GeneID" id="45025177"/>
<dbReference type="KEGG" id="bai:BAA_5617"/>
<dbReference type="HOGENOM" id="CLU_017168_0_1_9"/>
<dbReference type="GO" id="GO:0004519">
    <property type="term" value="F:endonuclease activity"/>
    <property type="evidence" value="ECO:0007669"/>
    <property type="project" value="UniProtKB-UniRule"/>
</dbReference>
<dbReference type="GO" id="GO:0006289">
    <property type="term" value="P:nucleotide-excision repair"/>
    <property type="evidence" value="ECO:0007669"/>
    <property type="project" value="InterPro"/>
</dbReference>
<dbReference type="GO" id="GO:0006290">
    <property type="term" value="P:pyrimidine dimer repair"/>
    <property type="evidence" value="ECO:0007669"/>
    <property type="project" value="UniProtKB-UniRule"/>
</dbReference>
<dbReference type="GO" id="GO:0009411">
    <property type="term" value="P:response to UV"/>
    <property type="evidence" value="ECO:0007669"/>
    <property type="project" value="InterPro"/>
</dbReference>
<dbReference type="Gene3D" id="3.20.20.150">
    <property type="entry name" value="Divalent-metal-dependent TIM barrel enzymes"/>
    <property type="match status" value="1"/>
</dbReference>
<dbReference type="HAMAP" id="MF_00606">
    <property type="entry name" value="UV_endonuclease"/>
    <property type="match status" value="1"/>
</dbReference>
<dbReference type="InterPro" id="IPR004601">
    <property type="entry name" value="UvdE"/>
</dbReference>
<dbReference type="InterPro" id="IPR023520">
    <property type="entry name" value="UvdE_bac"/>
</dbReference>
<dbReference type="InterPro" id="IPR036237">
    <property type="entry name" value="Xyl_isomerase-like_sf"/>
</dbReference>
<dbReference type="NCBIfam" id="TIGR00629">
    <property type="entry name" value="uvde"/>
    <property type="match status" value="1"/>
</dbReference>
<dbReference type="PANTHER" id="PTHR31290">
    <property type="entry name" value="UV-DAMAGE ENDONUCLEASE"/>
    <property type="match status" value="1"/>
</dbReference>
<dbReference type="PANTHER" id="PTHR31290:SF5">
    <property type="entry name" value="UV-DAMAGE ENDONUCLEASE"/>
    <property type="match status" value="1"/>
</dbReference>
<dbReference type="Pfam" id="PF03851">
    <property type="entry name" value="UvdE"/>
    <property type="match status" value="1"/>
</dbReference>
<dbReference type="SUPFAM" id="SSF51658">
    <property type="entry name" value="Xylose isomerase-like"/>
    <property type="match status" value="1"/>
</dbReference>
<accession>C3P2A9</accession>
<proteinExistence type="inferred from homology"/>
<reference key="1">
    <citation type="submission" date="2009-04" db="EMBL/GenBank/DDBJ databases">
        <title>Genome sequence of Bacillus anthracis A0248.</title>
        <authorList>
            <person name="Dodson R.J."/>
            <person name="Munk A.C."/>
            <person name="Bruce D."/>
            <person name="Detter C."/>
            <person name="Tapia R."/>
            <person name="Sutton G."/>
            <person name="Sims D."/>
            <person name="Brettin T."/>
        </authorList>
    </citation>
    <scope>NUCLEOTIDE SEQUENCE [LARGE SCALE GENOMIC DNA]</scope>
    <source>
        <strain>A0248</strain>
    </source>
</reference>
<gene>
    <name evidence="2" type="primary">uvsE</name>
    <name type="ordered locus">BAA_5617</name>
</gene>
<evidence type="ECO:0000250" key="1"/>
<evidence type="ECO:0000255" key="2">
    <source>
        <dbReference type="HAMAP-Rule" id="MF_00606"/>
    </source>
</evidence>
<protein>
    <recommendedName>
        <fullName evidence="2">UV DNA damage endonuclease</fullName>
        <shortName evidence="2">UV-endonuclease</shortName>
        <shortName evidence="2">UVED</shortName>
        <ecNumber evidence="2">3.-.-.-</ecNumber>
    </recommendedName>
</protein>
<comment type="function">
    <text evidence="1">Component in a DNA repair pathway. Removal of UV LIGHT damaged nucleotides. Recognizes pyrimidine dimers and cleave a phosphodiester bond immediately 5' to the lesion (By similarity).</text>
</comment>
<comment type="similarity">
    <text evidence="2">Belongs to the uve1/UvsE family.</text>
</comment>